<evidence type="ECO:0000255" key="1">
    <source>
        <dbReference type="HAMAP-Rule" id="MF_00249"/>
    </source>
</evidence>
<name>HSLU_BRASB</name>
<gene>
    <name evidence="1" type="primary">hslU</name>
    <name type="ordered locus">BBta_0152</name>
</gene>
<feature type="chain" id="PRO_1000012705" description="ATP-dependent protease ATPase subunit HslU">
    <location>
        <begin position="1"/>
        <end position="434"/>
    </location>
</feature>
<feature type="binding site" evidence="1">
    <location>
        <position position="18"/>
    </location>
    <ligand>
        <name>ATP</name>
        <dbReference type="ChEBI" id="CHEBI:30616"/>
    </ligand>
</feature>
<feature type="binding site" evidence="1">
    <location>
        <begin position="60"/>
        <end position="65"/>
    </location>
    <ligand>
        <name>ATP</name>
        <dbReference type="ChEBI" id="CHEBI:30616"/>
    </ligand>
</feature>
<feature type="binding site" evidence="1">
    <location>
        <position position="247"/>
    </location>
    <ligand>
        <name>ATP</name>
        <dbReference type="ChEBI" id="CHEBI:30616"/>
    </ligand>
</feature>
<feature type="binding site" evidence="1">
    <location>
        <position position="312"/>
    </location>
    <ligand>
        <name>ATP</name>
        <dbReference type="ChEBI" id="CHEBI:30616"/>
    </ligand>
</feature>
<feature type="binding site" evidence="1">
    <location>
        <position position="384"/>
    </location>
    <ligand>
        <name>ATP</name>
        <dbReference type="ChEBI" id="CHEBI:30616"/>
    </ligand>
</feature>
<sequence>MTDFSPREIVSELDRYIVGQADAKRAVSIALRNRWRRLQLDAGLREEVLPKNILMIGPTGVGKTEIARRLAKLAGAPFLKVEATKFTEVGYVGRDVEQIIRDLVEVAIVQVRERKRKDVAARAQLAAEERVLDALVGANSSAATRDSFRRKLRAGELNDKEIEIETQSSGGGFPMFEIPGMPGAQMGAISIGDIFGKLGGRTKTRRVTVESSHDILIAEESDKLLDNDQLVQEAISVVENNGIVFLDEIDKICVRENRHGGDVSREGVQRDLLPLIEGTTVSTKHGAVKTDHILFIASGAFHIAKPSDLLPELQGRLPIRVELQALTRDDMRRILTEPEASLIKQYVALMKTEGVTLDITDDAIDALADIAVAVNSTVENIGARRLQTVMERVLDEISFTASDRSGETMRVDAAYVQQHIGDLAKNADLSRFIL</sequence>
<dbReference type="EMBL" id="CP000494">
    <property type="protein sequence ID" value="ABQ32449.1"/>
    <property type="molecule type" value="Genomic_DNA"/>
</dbReference>
<dbReference type="RefSeq" id="WP_011942671.1">
    <property type="nucleotide sequence ID" value="NC_009485.1"/>
</dbReference>
<dbReference type="SMR" id="A5E8F5"/>
<dbReference type="STRING" id="288000.BBta_0152"/>
<dbReference type="KEGG" id="bbt:BBta_0152"/>
<dbReference type="eggNOG" id="COG1220">
    <property type="taxonomic scope" value="Bacteria"/>
</dbReference>
<dbReference type="HOGENOM" id="CLU_033123_0_0_5"/>
<dbReference type="OrthoDB" id="9804062at2"/>
<dbReference type="Proteomes" id="UP000000246">
    <property type="component" value="Chromosome"/>
</dbReference>
<dbReference type="GO" id="GO:0009376">
    <property type="term" value="C:HslUV protease complex"/>
    <property type="evidence" value="ECO:0007669"/>
    <property type="project" value="UniProtKB-UniRule"/>
</dbReference>
<dbReference type="GO" id="GO:0005524">
    <property type="term" value="F:ATP binding"/>
    <property type="evidence" value="ECO:0007669"/>
    <property type="project" value="UniProtKB-UniRule"/>
</dbReference>
<dbReference type="GO" id="GO:0016887">
    <property type="term" value="F:ATP hydrolysis activity"/>
    <property type="evidence" value="ECO:0007669"/>
    <property type="project" value="InterPro"/>
</dbReference>
<dbReference type="GO" id="GO:0008233">
    <property type="term" value="F:peptidase activity"/>
    <property type="evidence" value="ECO:0007669"/>
    <property type="project" value="InterPro"/>
</dbReference>
<dbReference type="GO" id="GO:0036402">
    <property type="term" value="F:proteasome-activating activity"/>
    <property type="evidence" value="ECO:0007669"/>
    <property type="project" value="UniProtKB-UniRule"/>
</dbReference>
<dbReference type="GO" id="GO:0043335">
    <property type="term" value="P:protein unfolding"/>
    <property type="evidence" value="ECO:0007669"/>
    <property type="project" value="UniProtKB-UniRule"/>
</dbReference>
<dbReference type="GO" id="GO:0051603">
    <property type="term" value="P:proteolysis involved in protein catabolic process"/>
    <property type="evidence" value="ECO:0007669"/>
    <property type="project" value="TreeGrafter"/>
</dbReference>
<dbReference type="CDD" id="cd19498">
    <property type="entry name" value="RecA-like_HslU"/>
    <property type="match status" value="1"/>
</dbReference>
<dbReference type="FunFam" id="3.40.50.300:FF:000213">
    <property type="entry name" value="ATP-dependent protease ATPase subunit HslU"/>
    <property type="match status" value="1"/>
</dbReference>
<dbReference type="FunFam" id="3.40.50.300:FF:000220">
    <property type="entry name" value="ATP-dependent protease ATPase subunit HslU"/>
    <property type="match status" value="1"/>
</dbReference>
<dbReference type="Gene3D" id="1.10.8.60">
    <property type="match status" value="1"/>
</dbReference>
<dbReference type="Gene3D" id="1.10.8.10">
    <property type="entry name" value="DNA helicase RuvA subunit, C-terminal domain"/>
    <property type="match status" value="2"/>
</dbReference>
<dbReference type="Gene3D" id="3.40.50.300">
    <property type="entry name" value="P-loop containing nucleotide triphosphate hydrolases"/>
    <property type="match status" value="2"/>
</dbReference>
<dbReference type="HAMAP" id="MF_00249">
    <property type="entry name" value="HslU"/>
    <property type="match status" value="1"/>
</dbReference>
<dbReference type="InterPro" id="IPR003593">
    <property type="entry name" value="AAA+_ATPase"/>
</dbReference>
<dbReference type="InterPro" id="IPR050052">
    <property type="entry name" value="ATP-dep_Clp_protease_ClpX"/>
</dbReference>
<dbReference type="InterPro" id="IPR003959">
    <property type="entry name" value="ATPase_AAA_core"/>
</dbReference>
<dbReference type="InterPro" id="IPR019489">
    <property type="entry name" value="Clp_ATPase_C"/>
</dbReference>
<dbReference type="InterPro" id="IPR004491">
    <property type="entry name" value="HslU"/>
</dbReference>
<dbReference type="InterPro" id="IPR027417">
    <property type="entry name" value="P-loop_NTPase"/>
</dbReference>
<dbReference type="NCBIfam" id="TIGR00390">
    <property type="entry name" value="hslU"/>
    <property type="match status" value="1"/>
</dbReference>
<dbReference type="NCBIfam" id="NF003544">
    <property type="entry name" value="PRK05201.1"/>
    <property type="match status" value="1"/>
</dbReference>
<dbReference type="PANTHER" id="PTHR48102">
    <property type="entry name" value="ATP-DEPENDENT CLP PROTEASE ATP-BINDING SUBUNIT CLPX-LIKE, MITOCHONDRIAL-RELATED"/>
    <property type="match status" value="1"/>
</dbReference>
<dbReference type="PANTHER" id="PTHR48102:SF3">
    <property type="entry name" value="ATP-DEPENDENT PROTEASE ATPASE SUBUNIT HSLU"/>
    <property type="match status" value="1"/>
</dbReference>
<dbReference type="Pfam" id="PF00004">
    <property type="entry name" value="AAA"/>
    <property type="match status" value="1"/>
</dbReference>
<dbReference type="Pfam" id="PF07724">
    <property type="entry name" value="AAA_2"/>
    <property type="match status" value="1"/>
</dbReference>
<dbReference type="Pfam" id="PF10431">
    <property type="entry name" value="ClpB_D2-small"/>
    <property type="match status" value="1"/>
</dbReference>
<dbReference type="SMART" id="SM00382">
    <property type="entry name" value="AAA"/>
    <property type="match status" value="1"/>
</dbReference>
<dbReference type="SMART" id="SM01086">
    <property type="entry name" value="ClpB_D2-small"/>
    <property type="match status" value="1"/>
</dbReference>
<dbReference type="SUPFAM" id="SSF52540">
    <property type="entry name" value="P-loop containing nucleoside triphosphate hydrolases"/>
    <property type="match status" value="1"/>
</dbReference>
<accession>A5E8F5</accession>
<reference key="1">
    <citation type="journal article" date="2007" name="Science">
        <title>Legumes symbioses: absence of nod genes in photosynthetic bradyrhizobia.</title>
        <authorList>
            <person name="Giraud E."/>
            <person name="Moulin L."/>
            <person name="Vallenet D."/>
            <person name="Barbe V."/>
            <person name="Cytryn E."/>
            <person name="Avarre J.-C."/>
            <person name="Jaubert M."/>
            <person name="Simon D."/>
            <person name="Cartieaux F."/>
            <person name="Prin Y."/>
            <person name="Bena G."/>
            <person name="Hannibal L."/>
            <person name="Fardoux J."/>
            <person name="Kojadinovic M."/>
            <person name="Vuillet L."/>
            <person name="Lajus A."/>
            <person name="Cruveiller S."/>
            <person name="Rouy Z."/>
            <person name="Mangenot S."/>
            <person name="Segurens B."/>
            <person name="Dossat C."/>
            <person name="Franck W.L."/>
            <person name="Chang W.-S."/>
            <person name="Saunders E."/>
            <person name="Bruce D."/>
            <person name="Richardson P."/>
            <person name="Normand P."/>
            <person name="Dreyfus B."/>
            <person name="Pignol D."/>
            <person name="Stacey G."/>
            <person name="Emerich D."/>
            <person name="Vermeglio A."/>
            <person name="Medigue C."/>
            <person name="Sadowsky M."/>
        </authorList>
    </citation>
    <scope>NUCLEOTIDE SEQUENCE [LARGE SCALE GENOMIC DNA]</scope>
    <source>
        <strain>BTAi1 / ATCC BAA-1182</strain>
    </source>
</reference>
<keyword id="KW-0067">ATP-binding</keyword>
<keyword id="KW-0143">Chaperone</keyword>
<keyword id="KW-0963">Cytoplasm</keyword>
<keyword id="KW-0547">Nucleotide-binding</keyword>
<keyword id="KW-1185">Reference proteome</keyword>
<comment type="function">
    <text evidence="1">ATPase subunit of a proteasome-like degradation complex; this subunit has chaperone activity. The binding of ATP and its subsequent hydrolysis by HslU are essential for unfolding of protein substrates subsequently hydrolyzed by HslV. HslU recognizes the N-terminal part of its protein substrates and unfolds these before they are guided to HslV for hydrolysis.</text>
</comment>
<comment type="subunit">
    <text evidence="1">A double ring-shaped homohexamer of HslV is capped on each side by a ring-shaped HslU homohexamer. The assembly of the HslU/HslV complex is dependent on binding of ATP.</text>
</comment>
<comment type="subcellular location">
    <subcellularLocation>
        <location evidence="1">Cytoplasm</location>
    </subcellularLocation>
</comment>
<comment type="similarity">
    <text evidence="1">Belongs to the ClpX chaperone family. HslU subfamily.</text>
</comment>
<protein>
    <recommendedName>
        <fullName evidence="1">ATP-dependent protease ATPase subunit HslU</fullName>
    </recommendedName>
    <alternativeName>
        <fullName evidence="1">Unfoldase HslU</fullName>
    </alternativeName>
</protein>
<organism>
    <name type="scientific">Bradyrhizobium sp. (strain BTAi1 / ATCC BAA-1182)</name>
    <dbReference type="NCBI Taxonomy" id="288000"/>
    <lineage>
        <taxon>Bacteria</taxon>
        <taxon>Pseudomonadati</taxon>
        <taxon>Pseudomonadota</taxon>
        <taxon>Alphaproteobacteria</taxon>
        <taxon>Hyphomicrobiales</taxon>
        <taxon>Nitrobacteraceae</taxon>
        <taxon>Bradyrhizobium</taxon>
    </lineage>
</organism>
<proteinExistence type="inferred from homology"/>